<keyword id="KW-1185">Reference proteome</keyword>
<keyword id="KW-0677">Repeat</keyword>
<keyword id="KW-0853">WD repeat</keyword>
<sequence length="369" mass="42031">MQTNNPSYFFRSESALQDEKRKEEKSHNPNGNPRNLKAKILNIELDRTTPKKKQFPRLFVCEASHICKLYDLEINKTCKTYKGHSGPVTCCQIESLRKDGKVRHIYTGSWDHTIKKWNVSTGECVETLIGHTDYVKCLLLLEEEGLLLSGSTDASLIVWDVSSQPSRLLYKLTGHSRGIECITRQPNTDIFWTCGSESSIRCWHITKVGGSQLEEEGFWGHQSNVYCLLFDPQDSEALWTASADKTVREWSLYQGIHEETRMEHPDVCTDVLTLADGNIATACRDEEIRVWDTTTGNVKDIYSGHYESVTKILQWKSYLISSSLDQTIRVWDLEYSADNNEADDHPSLGPPSTKLTAEELAELEELMND</sequence>
<reference key="1">
    <citation type="journal article" date="2002" name="Nature">
        <title>The genome sequence of Schizosaccharomyces pombe.</title>
        <authorList>
            <person name="Wood V."/>
            <person name="Gwilliam R."/>
            <person name="Rajandream M.A."/>
            <person name="Lyne M.H."/>
            <person name="Lyne R."/>
            <person name="Stewart A."/>
            <person name="Sgouros J.G."/>
            <person name="Peat N."/>
            <person name="Hayles J."/>
            <person name="Baker S.G."/>
            <person name="Basham D."/>
            <person name="Bowman S."/>
            <person name="Brooks K."/>
            <person name="Brown D."/>
            <person name="Brown S."/>
            <person name="Chillingworth T."/>
            <person name="Churcher C.M."/>
            <person name="Collins M."/>
            <person name="Connor R."/>
            <person name="Cronin A."/>
            <person name="Davis P."/>
            <person name="Feltwell T."/>
            <person name="Fraser A."/>
            <person name="Gentles S."/>
            <person name="Goble A."/>
            <person name="Hamlin N."/>
            <person name="Harris D.E."/>
            <person name="Hidalgo J."/>
            <person name="Hodgson G."/>
            <person name="Holroyd S."/>
            <person name="Hornsby T."/>
            <person name="Howarth S."/>
            <person name="Huckle E.J."/>
            <person name="Hunt S."/>
            <person name="Jagels K."/>
            <person name="James K.D."/>
            <person name="Jones L."/>
            <person name="Jones M."/>
            <person name="Leather S."/>
            <person name="McDonald S."/>
            <person name="McLean J."/>
            <person name="Mooney P."/>
            <person name="Moule S."/>
            <person name="Mungall K.L."/>
            <person name="Murphy L.D."/>
            <person name="Niblett D."/>
            <person name="Odell C."/>
            <person name="Oliver K."/>
            <person name="O'Neil S."/>
            <person name="Pearson D."/>
            <person name="Quail M.A."/>
            <person name="Rabbinowitsch E."/>
            <person name="Rutherford K.M."/>
            <person name="Rutter S."/>
            <person name="Saunders D."/>
            <person name="Seeger K."/>
            <person name="Sharp S."/>
            <person name="Skelton J."/>
            <person name="Simmonds M.N."/>
            <person name="Squares R."/>
            <person name="Squares S."/>
            <person name="Stevens K."/>
            <person name="Taylor K."/>
            <person name="Taylor R.G."/>
            <person name="Tivey A."/>
            <person name="Walsh S.V."/>
            <person name="Warren T."/>
            <person name="Whitehead S."/>
            <person name="Woodward J.R."/>
            <person name="Volckaert G."/>
            <person name="Aert R."/>
            <person name="Robben J."/>
            <person name="Grymonprez B."/>
            <person name="Weltjens I."/>
            <person name="Vanstreels E."/>
            <person name="Rieger M."/>
            <person name="Schaefer M."/>
            <person name="Mueller-Auer S."/>
            <person name="Gabel C."/>
            <person name="Fuchs M."/>
            <person name="Duesterhoeft A."/>
            <person name="Fritzc C."/>
            <person name="Holzer E."/>
            <person name="Moestl D."/>
            <person name="Hilbert H."/>
            <person name="Borzym K."/>
            <person name="Langer I."/>
            <person name="Beck A."/>
            <person name="Lehrach H."/>
            <person name="Reinhardt R."/>
            <person name="Pohl T.M."/>
            <person name="Eger P."/>
            <person name="Zimmermann W."/>
            <person name="Wedler H."/>
            <person name="Wambutt R."/>
            <person name="Purnelle B."/>
            <person name="Goffeau A."/>
            <person name="Cadieu E."/>
            <person name="Dreano S."/>
            <person name="Gloux S."/>
            <person name="Lelaure V."/>
            <person name="Mottier S."/>
            <person name="Galibert F."/>
            <person name="Aves S.J."/>
            <person name="Xiang Z."/>
            <person name="Hunt C."/>
            <person name="Moore K."/>
            <person name="Hurst S.M."/>
            <person name="Lucas M."/>
            <person name="Rochet M."/>
            <person name="Gaillardin C."/>
            <person name="Tallada V.A."/>
            <person name="Garzon A."/>
            <person name="Thode G."/>
            <person name="Daga R.R."/>
            <person name="Cruzado L."/>
            <person name="Jimenez J."/>
            <person name="Sanchez M."/>
            <person name="del Rey F."/>
            <person name="Benito J."/>
            <person name="Dominguez A."/>
            <person name="Revuelta J.L."/>
            <person name="Moreno S."/>
            <person name="Armstrong J."/>
            <person name="Forsburg S.L."/>
            <person name="Cerutti L."/>
            <person name="Lowe T."/>
            <person name="McCombie W.R."/>
            <person name="Paulsen I."/>
            <person name="Potashkin J."/>
            <person name="Shpakovski G.V."/>
            <person name="Ussery D."/>
            <person name="Barrell B.G."/>
            <person name="Nurse P."/>
        </authorList>
    </citation>
    <scope>NUCLEOTIDE SEQUENCE [LARGE SCALE GENOMIC DNA]</scope>
    <source>
        <strain>972 / ATCC 24843</strain>
    </source>
</reference>
<name>YQF1_SCHPO</name>
<feature type="chain" id="PRO_0000051500" description="Uncharacterized WD repeat-containing protein C126.01c">
    <location>
        <begin position="1"/>
        <end position="369"/>
    </location>
</feature>
<feature type="repeat" description="WD 1">
    <location>
        <begin position="83"/>
        <end position="127"/>
    </location>
</feature>
<feature type="repeat" description="WD 2">
    <location>
        <begin position="130"/>
        <end position="169"/>
    </location>
</feature>
<feature type="repeat" description="WD 3">
    <location>
        <begin position="174"/>
        <end position="213"/>
    </location>
</feature>
<feature type="repeat" description="WD 4">
    <location>
        <begin position="220"/>
        <end position="260"/>
    </location>
</feature>
<feature type="repeat" description="WD 5">
    <location>
        <begin position="263"/>
        <end position="301"/>
    </location>
</feature>
<feature type="repeat" description="WD 6">
    <location>
        <begin position="304"/>
        <end position="341"/>
    </location>
</feature>
<feature type="region of interest" description="Disordered" evidence="1">
    <location>
        <begin position="1"/>
        <end position="35"/>
    </location>
</feature>
<feature type="compositionally biased region" description="Basic and acidic residues" evidence="1">
    <location>
        <begin position="17"/>
        <end position="27"/>
    </location>
</feature>
<proteinExistence type="predicted"/>
<evidence type="ECO:0000256" key="1">
    <source>
        <dbReference type="SAM" id="MobiDB-lite"/>
    </source>
</evidence>
<organism>
    <name type="scientific">Schizosaccharomyces pombe (strain 972 / ATCC 24843)</name>
    <name type="common">Fission yeast</name>
    <dbReference type="NCBI Taxonomy" id="284812"/>
    <lineage>
        <taxon>Eukaryota</taxon>
        <taxon>Fungi</taxon>
        <taxon>Dikarya</taxon>
        <taxon>Ascomycota</taxon>
        <taxon>Taphrinomycotina</taxon>
        <taxon>Schizosaccharomycetes</taxon>
        <taxon>Schizosaccharomycetales</taxon>
        <taxon>Schizosaccharomycetaceae</taxon>
        <taxon>Schizosaccharomyces</taxon>
    </lineage>
</organism>
<protein>
    <recommendedName>
        <fullName>Uncharacterized WD repeat-containing protein C126.01c</fullName>
    </recommendedName>
</protein>
<gene>
    <name type="ORF">SPCC126.01c</name>
    <name type="ORF">SPCC576.18c</name>
</gene>
<dbReference type="EMBL" id="CU329672">
    <property type="protein sequence ID" value="CAA21197.2"/>
    <property type="molecule type" value="Genomic_DNA"/>
</dbReference>
<dbReference type="PIR" id="T40905">
    <property type="entry name" value="T40905"/>
</dbReference>
<dbReference type="RefSeq" id="NP_588444.2">
    <property type="nucleotide sequence ID" value="NM_001023435.2"/>
</dbReference>
<dbReference type="SMR" id="O94394"/>
<dbReference type="BioGRID" id="275276">
    <property type="interactions" value="10"/>
</dbReference>
<dbReference type="FunCoup" id="O94394">
    <property type="interactions" value="283"/>
</dbReference>
<dbReference type="STRING" id="284812.O94394"/>
<dbReference type="iPTMnet" id="O94394"/>
<dbReference type="PaxDb" id="4896-SPCC126.01c.1"/>
<dbReference type="EnsemblFungi" id="SPCC126.01c.1">
    <property type="protein sequence ID" value="SPCC126.01c.1:pep"/>
    <property type="gene ID" value="SPCC126.01c"/>
</dbReference>
<dbReference type="KEGG" id="spo:2538691"/>
<dbReference type="PomBase" id="SPCC126.01c"/>
<dbReference type="VEuPathDB" id="FungiDB:SPCC126.01c"/>
<dbReference type="eggNOG" id="KOG0263">
    <property type="taxonomic scope" value="Eukaryota"/>
</dbReference>
<dbReference type="HOGENOM" id="CLU_000288_57_4_1"/>
<dbReference type="InParanoid" id="O94394"/>
<dbReference type="OMA" id="TIRTWPL"/>
<dbReference type="PhylomeDB" id="O94394"/>
<dbReference type="PRO" id="PR:O94394"/>
<dbReference type="Proteomes" id="UP000002485">
    <property type="component" value="Chromosome III"/>
</dbReference>
<dbReference type="GO" id="GO:0005829">
    <property type="term" value="C:cytosol"/>
    <property type="evidence" value="ECO:0007005"/>
    <property type="project" value="PomBase"/>
</dbReference>
<dbReference type="GO" id="GO:0005634">
    <property type="term" value="C:nucleus"/>
    <property type="evidence" value="ECO:0007005"/>
    <property type="project" value="PomBase"/>
</dbReference>
<dbReference type="CDD" id="cd00200">
    <property type="entry name" value="WD40"/>
    <property type="match status" value="1"/>
</dbReference>
<dbReference type="FunFam" id="2.130.10.10:FF:001196">
    <property type="entry name" value="WD repeat protein (AFU_orthologue AFUA_1G12380)"/>
    <property type="match status" value="1"/>
</dbReference>
<dbReference type="Gene3D" id="2.130.10.10">
    <property type="entry name" value="YVTN repeat-like/Quinoprotein amine dehydrogenase"/>
    <property type="match status" value="2"/>
</dbReference>
<dbReference type="InterPro" id="IPR020472">
    <property type="entry name" value="G-protein_beta_WD-40_rep"/>
</dbReference>
<dbReference type="InterPro" id="IPR015943">
    <property type="entry name" value="WD40/YVTN_repeat-like_dom_sf"/>
</dbReference>
<dbReference type="InterPro" id="IPR019775">
    <property type="entry name" value="WD40_repeat_CS"/>
</dbReference>
<dbReference type="InterPro" id="IPR036322">
    <property type="entry name" value="WD40_repeat_dom_sf"/>
</dbReference>
<dbReference type="InterPro" id="IPR001680">
    <property type="entry name" value="WD40_rpt"/>
</dbReference>
<dbReference type="PANTHER" id="PTHR19848:SF8">
    <property type="entry name" value="F-BOX AND WD REPEAT DOMAIN CONTAINING 7"/>
    <property type="match status" value="1"/>
</dbReference>
<dbReference type="PANTHER" id="PTHR19848">
    <property type="entry name" value="WD40 REPEAT PROTEIN"/>
    <property type="match status" value="1"/>
</dbReference>
<dbReference type="Pfam" id="PF00400">
    <property type="entry name" value="WD40"/>
    <property type="match status" value="5"/>
</dbReference>
<dbReference type="PRINTS" id="PR00320">
    <property type="entry name" value="GPROTEINBRPT"/>
</dbReference>
<dbReference type="SMART" id="SM00320">
    <property type="entry name" value="WD40"/>
    <property type="match status" value="6"/>
</dbReference>
<dbReference type="SUPFAM" id="SSF50978">
    <property type="entry name" value="WD40 repeat-like"/>
    <property type="match status" value="1"/>
</dbReference>
<dbReference type="PROSITE" id="PS00678">
    <property type="entry name" value="WD_REPEATS_1"/>
    <property type="match status" value="3"/>
</dbReference>
<dbReference type="PROSITE" id="PS50082">
    <property type="entry name" value="WD_REPEATS_2"/>
    <property type="match status" value="5"/>
</dbReference>
<dbReference type="PROSITE" id="PS50294">
    <property type="entry name" value="WD_REPEATS_REGION"/>
    <property type="match status" value="1"/>
</dbReference>
<accession>O94394</accession>
<accession>O74900</accession>